<comment type="function">
    <text evidence="1 3">Photoreceptor required for image-forming vision at low light intensity. Required for photoreceptor cell viability after birth (By similarity). Light-induced isomerization of 11-cis to all-trans retinal triggers a conformational change that activates signaling via G-proteins. Subsequent receptor phosphorylation mediates displacement of the bound G-protein alpha subunit by the arrestin SAG and terminates signaling (By similarity).</text>
</comment>
<comment type="subunit">
    <text evidence="1 3">Homodimer (By similarity). May form a complex composed of RHO, GRK1 and RCVRN in a Ca(2+)-dependent manner; RCVRN prevents the interaction between GRK1 and RHO (By similarity). Interacts with GRK1 (By similarity). Interacts (phosphorylated form) with SAG. Interacts with GNAT1. Interacts with GNAT3. SAG and G-proteins compete for a common binding site (By similarity). Interacts with PRCD; the interaction promotes PRCD stability. Forms a complex with ASAP1 and ARF4. Forms a complex with ASAP1, RAB11A, Rabin8/RAB3IP, ARF4 and RAB11FIP3; the complex regulates Golgi-to-cilia rhodopsin/RHO transport in photoreceptors (By similarity).</text>
</comment>
<comment type="subcellular location">
    <subcellularLocation>
        <location evidence="1">Membrane</location>
        <topology evidence="1">Multi-pass membrane protein</topology>
    </subcellularLocation>
    <subcellularLocation>
        <location evidence="1">Cell projection</location>
        <location evidence="1">Cilium</location>
        <location evidence="1">Photoreceptor outer segment</location>
    </subcellularLocation>
    <text evidence="3">Synthesized in the inner segment (IS) of rod photoreceptor cells before vectorial transport to disk membranes in the rod outer segment (OS) photosensory cilia.</text>
</comment>
<comment type="PTM">
    <text evidence="1">Phosphorylated on some or all of the serine and threonine residues present in the C-terminal region.</text>
</comment>
<comment type="PTM">
    <text evidence="1">Contains one covalently linked retinal chromophore. Upon light absorption, the covalently bound 11-cis-retinal is converted to all-trans-retinal. After hydrolysis of the Schiff base and release of the covalently bound all-trans-retinal, active rhodopsin is regenerated by binding of a fresh molecule of 11-cis-retinal.</text>
</comment>
<comment type="similarity">
    <text evidence="5">Belongs to the G-protein coupled receptor 1 family. Opsin subfamily.</text>
</comment>
<gene>
    <name type="primary">RHO</name>
    <name type="synonym">RH1</name>
</gene>
<reference key="1">
    <citation type="journal article" date="2003" name="Gene">
        <title>Absorption spectra of reconstituted visual pigments of a nocturnal prosimian, Otolemur crassicaudatus.</title>
        <authorList>
            <person name="Kawamura S."/>
            <person name="Kubotera N."/>
        </authorList>
    </citation>
    <scope>NUCLEOTIDE SEQUENCE [GENOMIC DNA / MRNA]</scope>
    <source>
        <tissue>Retina</tissue>
    </source>
</reference>
<keyword id="KW-0007">Acetylation</keyword>
<keyword id="KW-0966">Cell projection</keyword>
<keyword id="KW-0157">Chromophore</keyword>
<keyword id="KW-1015">Disulfide bond</keyword>
<keyword id="KW-0297">G-protein coupled receptor</keyword>
<keyword id="KW-0325">Glycoprotein</keyword>
<keyword id="KW-0449">Lipoprotein</keyword>
<keyword id="KW-0472">Membrane</keyword>
<keyword id="KW-0479">Metal-binding</keyword>
<keyword id="KW-0564">Palmitate</keyword>
<keyword id="KW-0597">Phosphoprotein</keyword>
<keyword id="KW-0600">Photoreceptor protein</keyword>
<keyword id="KW-0675">Receptor</keyword>
<keyword id="KW-0681">Retinal protein</keyword>
<keyword id="KW-0716">Sensory transduction</keyword>
<keyword id="KW-0807">Transducer</keyword>
<keyword id="KW-0812">Transmembrane</keyword>
<keyword id="KW-1133">Transmembrane helix</keyword>
<keyword id="KW-0844">Vision</keyword>
<keyword id="KW-0862">Zinc</keyword>
<proteinExistence type="evidence at transcript level"/>
<dbReference type="EMBL" id="AB112594">
    <property type="protein sequence ID" value="BAD02410.1"/>
    <property type="molecule type" value="Genomic_DNA"/>
</dbReference>
<dbReference type="EMBL" id="AB112591">
    <property type="protein sequence ID" value="BAD02408.1"/>
    <property type="molecule type" value="mRNA"/>
</dbReference>
<dbReference type="SMR" id="Q769E8"/>
<dbReference type="GlyCosmos" id="Q769E8">
    <property type="glycosylation" value="2 sites, No reported glycans"/>
</dbReference>
<dbReference type="GO" id="GO:0016020">
    <property type="term" value="C:membrane"/>
    <property type="evidence" value="ECO:0000250"/>
    <property type="project" value="UniProtKB"/>
</dbReference>
<dbReference type="GO" id="GO:0097381">
    <property type="term" value="C:photoreceptor disc membrane"/>
    <property type="evidence" value="ECO:0000250"/>
    <property type="project" value="UniProtKB"/>
</dbReference>
<dbReference type="GO" id="GO:0060342">
    <property type="term" value="C:photoreceptor inner segment membrane"/>
    <property type="evidence" value="ECO:0000250"/>
    <property type="project" value="UniProtKB"/>
</dbReference>
<dbReference type="GO" id="GO:0042622">
    <property type="term" value="C:photoreceptor outer segment membrane"/>
    <property type="evidence" value="ECO:0000250"/>
    <property type="project" value="UniProtKB"/>
</dbReference>
<dbReference type="GO" id="GO:0005886">
    <property type="term" value="C:plasma membrane"/>
    <property type="evidence" value="ECO:0000250"/>
    <property type="project" value="UniProtKB"/>
</dbReference>
<dbReference type="GO" id="GO:0005502">
    <property type="term" value="F:11-cis retinal binding"/>
    <property type="evidence" value="ECO:0000250"/>
    <property type="project" value="UniProtKB"/>
</dbReference>
<dbReference type="GO" id="GO:0008020">
    <property type="term" value="F:G protein-coupled photoreceptor activity"/>
    <property type="evidence" value="ECO:0000250"/>
    <property type="project" value="UniProtKB"/>
</dbReference>
<dbReference type="GO" id="GO:0046872">
    <property type="term" value="F:metal ion binding"/>
    <property type="evidence" value="ECO:0007669"/>
    <property type="project" value="UniProtKB-KW"/>
</dbReference>
<dbReference type="GO" id="GO:0016038">
    <property type="term" value="P:absorption of visible light"/>
    <property type="evidence" value="ECO:0000250"/>
    <property type="project" value="AgBase"/>
</dbReference>
<dbReference type="GO" id="GO:0016056">
    <property type="term" value="P:G protein-coupled opsin signaling pathway"/>
    <property type="evidence" value="ECO:0000250"/>
    <property type="project" value="UniProtKB"/>
</dbReference>
<dbReference type="GO" id="GO:0007186">
    <property type="term" value="P:G protein-coupled receptor signaling pathway"/>
    <property type="evidence" value="ECO:0000250"/>
    <property type="project" value="UniProtKB"/>
</dbReference>
<dbReference type="GO" id="GO:0007601">
    <property type="term" value="P:visual perception"/>
    <property type="evidence" value="ECO:0007669"/>
    <property type="project" value="UniProtKB-KW"/>
</dbReference>
<dbReference type="CDD" id="cd15080">
    <property type="entry name" value="7tmA_MWS_opsin"/>
    <property type="match status" value="1"/>
</dbReference>
<dbReference type="FunFam" id="1.20.1070.10:FF:000018">
    <property type="entry name" value="Rhodopsin"/>
    <property type="match status" value="1"/>
</dbReference>
<dbReference type="Gene3D" id="1.20.1070.10">
    <property type="entry name" value="Rhodopsin 7-helix transmembrane proteins"/>
    <property type="match status" value="1"/>
</dbReference>
<dbReference type="InterPro" id="IPR050125">
    <property type="entry name" value="GPCR_opsins"/>
</dbReference>
<dbReference type="InterPro" id="IPR000276">
    <property type="entry name" value="GPCR_Rhodpsn"/>
</dbReference>
<dbReference type="InterPro" id="IPR017452">
    <property type="entry name" value="GPCR_Rhodpsn_7TM"/>
</dbReference>
<dbReference type="InterPro" id="IPR001760">
    <property type="entry name" value="Opsin"/>
</dbReference>
<dbReference type="InterPro" id="IPR027430">
    <property type="entry name" value="Retinal_BS"/>
</dbReference>
<dbReference type="InterPro" id="IPR000732">
    <property type="entry name" value="Rhodopsin"/>
</dbReference>
<dbReference type="InterPro" id="IPR019477">
    <property type="entry name" value="Rhodopsin_N"/>
</dbReference>
<dbReference type="PANTHER" id="PTHR24240">
    <property type="entry name" value="OPSIN"/>
    <property type="match status" value="1"/>
</dbReference>
<dbReference type="Pfam" id="PF00001">
    <property type="entry name" value="7tm_1"/>
    <property type="match status" value="1"/>
</dbReference>
<dbReference type="Pfam" id="PF10413">
    <property type="entry name" value="Rhodopsin_N"/>
    <property type="match status" value="1"/>
</dbReference>
<dbReference type="PRINTS" id="PR00237">
    <property type="entry name" value="GPCRRHODOPSN"/>
</dbReference>
<dbReference type="PRINTS" id="PR00238">
    <property type="entry name" value="OPSIN"/>
</dbReference>
<dbReference type="PRINTS" id="PR00579">
    <property type="entry name" value="RHODOPSIN"/>
</dbReference>
<dbReference type="SUPFAM" id="SSF81321">
    <property type="entry name" value="Family A G protein-coupled receptor-like"/>
    <property type="match status" value="1"/>
</dbReference>
<dbReference type="PROSITE" id="PS00237">
    <property type="entry name" value="G_PROTEIN_RECEP_F1_1"/>
    <property type="match status" value="1"/>
</dbReference>
<dbReference type="PROSITE" id="PS50262">
    <property type="entry name" value="G_PROTEIN_RECEP_F1_2"/>
    <property type="match status" value="1"/>
</dbReference>
<dbReference type="PROSITE" id="PS00238">
    <property type="entry name" value="OPSIN"/>
    <property type="match status" value="1"/>
</dbReference>
<name>OPSD_OTOCR</name>
<protein>
    <recommendedName>
        <fullName>Rhodopsin</fullName>
    </recommendedName>
</protein>
<organism>
    <name type="scientific">Otolemur crassicaudatus</name>
    <name type="common">Brown greater galago</name>
    <name type="synonym">Galago crassicaudatus</name>
    <dbReference type="NCBI Taxonomy" id="9463"/>
    <lineage>
        <taxon>Eukaryota</taxon>
        <taxon>Metazoa</taxon>
        <taxon>Chordata</taxon>
        <taxon>Craniata</taxon>
        <taxon>Vertebrata</taxon>
        <taxon>Euteleostomi</taxon>
        <taxon>Mammalia</taxon>
        <taxon>Eutheria</taxon>
        <taxon>Euarchontoglires</taxon>
        <taxon>Primates</taxon>
        <taxon>Strepsirrhini</taxon>
        <taxon>Lorisiformes</taxon>
        <taxon>Galagidae</taxon>
        <taxon>Otolemur</taxon>
    </lineage>
</organism>
<sequence length="348" mass="39112">MNGTEGPNFYVPFSNATGVVRSPFEYPQYYLAEPWQFSMLAAYMFMLIVLGFPINFLTLYVTVQHKKLRTPLNYILLNLAVADLFMVFGGFTTTLYTSLHGYFVFGPTGCNLEGFFATLGGEIALWSLVVLAIERYVVVCKPMSNFRFGENHAIMGLVFTWIMALACAAPPLVGWSRYIPEGMQCSCGIDYYTLKPEVNNESFVIYMFVVHFFIPLFVIFFCYGQLVFTVKEAAAQQQESATTQKAEKEVTRMVIIMVIAFLICWLPYAGVAFYIFTHQGSNFGPIFMTLPAFFAKTASIYNPVIYIMMNKQFRTCMITTLCCGKNPLGDDEASTTASKTETSQVAPA</sequence>
<accession>Q769E8</accession>
<evidence type="ECO:0000250" key="1">
    <source>
        <dbReference type="UniProtKB" id="P02699"/>
    </source>
</evidence>
<evidence type="ECO:0000250" key="2">
    <source>
        <dbReference type="UniProtKB" id="P02700"/>
    </source>
</evidence>
<evidence type="ECO:0000250" key="3">
    <source>
        <dbReference type="UniProtKB" id="P08100"/>
    </source>
</evidence>
<evidence type="ECO:0000255" key="4"/>
<evidence type="ECO:0000255" key="5">
    <source>
        <dbReference type="PROSITE-ProRule" id="PRU00521"/>
    </source>
</evidence>
<evidence type="ECO:0000305" key="6"/>
<feature type="chain" id="PRO_0000227018" description="Rhodopsin">
    <location>
        <begin position="1"/>
        <end position="348"/>
    </location>
</feature>
<feature type="topological domain" description="Extracellular" evidence="6">
    <location>
        <begin position="1"/>
        <end position="36"/>
    </location>
</feature>
<feature type="transmembrane region" description="Helical; Name=1" evidence="1">
    <location>
        <begin position="37"/>
        <end position="61"/>
    </location>
</feature>
<feature type="topological domain" description="Cytoplasmic" evidence="6">
    <location>
        <begin position="62"/>
        <end position="73"/>
    </location>
</feature>
<feature type="transmembrane region" description="Helical; Name=2" evidence="1">
    <location>
        <begin position="74"/>
        <end position="96"/>
    </location>
</feature>
<feature type="topological domain" description="Extracellular" evidence="6">
    <location>
        <begin position="97"/>
        <end position="110"/>
    </location>
</feature>
<feature type="transmembrane region" description="Helical; Name=3" evidence="1">
    <location>
        <begin position="111"/>
        <end position="133"/>
    </location>
</feature>
<feature type="topological domain" description="Cytoplasmic" evidence="6">
    <location>
        <begin position="134"/>
        <end position="152"/>
    </location>
</feature>
<feature type="transmembrane region" description="Helical; Name=4" evidence="1">
    <location>
        <begin position="153"/>
        <end position="173"/>
    </location>
</feature>
<feature type="topological domain" description="Extracellular" evidence="6">
    <location>
        <begin position="174"/>
        <end position="202"/>
    </location>
</feature>
<feature type="transmembrane region" description="Helical; Name=5" evidence="1">
    <location>
        <begin position="203"/>
        <end position="224"/>
    </location>
</feature>
<feature type="topological domain" description="Cytoplasmic" evidence="6">
    <location>
        <begin position="225"/>
        <end position="252"/>
    </location>
</feature>
<feature type="transmembrane region" description="Helical; Name=6" evidence="1">
    <location>
        <begin position="253"/>
        <end position="274"/>
    </location>
</feature>
<feature type="topological domain" description="Extracellular" evidence="6">
    <location>
        <begin position="275"/>
        <end position="286"/>
    </location>
</feature>
<feature type="transmembrane region" description="Helical; Name=7" evidence="1">
    <location>
        <begin position="287"/>
        <end position="308"/>
    </location>
</feature>
<feature type="topological domain" description="Cytoplasmic" evidence="6">
    <location>
        <begin position="309"/>
        <end position="348"/>
    </location>
</feature>
<feature type="region of interest" description="Interaction with SAG" evidence="1">
    <location>
        <begin position="330"/>
        <end position="348"/>
    </location>
</feature>
<feature type="short sequence motif" description="'Ionic lock' involved in activated form stabilization" evidence="1">
    <location>
        <begin position="134"/>
        <end position="136"/>
    </location>
</feature>
<feature type="binding site" evidence="1">
    <location>
        <position position="201"/>
    </location>
    <ligand>
        <name>Zn(2+)</name>
        <dbReference type="ChEBI" id="CHEBI:29105"/>
    </ligand>
</feature>
<feature type="binding site" evidence="1">
    <location>
        <position position="279"/>
    </location>
    <ligand>
        <name>Zn(2+)</name>
        <dbReference type="ChEBI" id="CHEBI:29105"/>
    </ligand>
</feature>
<feature type="site" description="Plays an important role in the conformation switch to the active conformation" evidence="1">
    <location>
        <position position="113"/>
    </location>
</feature>
<feature type="modified residue" description="N-acetylmethionine" evidence="1">
    <location>
        <position position="1"/>
    </location>
</feature>
<feature type="modified residue" description="N6-(retinylidene)lysine" evidence="1">
    <location>
        <position position="296"/>
    </location>
</feature>
<feature type="modified residue" description="Phosphoserine" evidence="2">
    <location>
        <position position="334"/>
    </location>
</feature>
<feature type="modified residue" description="Phosphothreonine" evidence="2">
    <location>
        <position position="335"/>
    </location>
</feature>
<feature type="modified residue" description="Phosphothreonine" evidence="2">
    <location>
        <position position="336"/>
    </location>
</feature>
<feature type="modified residue" description="Phosphoserine" evidence="2">
    <location>
        <position position="338"/>
    </location>
</feature>
<feature type="modified residue" description="Phosphothreonine" evidence="1">
    <location>
        <position position="340"/>
    </location>
</feature>
<feature type="modified residue" description="Phosphothreonine" evidence="1">
    <location>
        <position position="342"/>
    </location>
</feature>
<feature type="modified residue" description="Phosphoserine" evidence="1">
    <location>
        <position position="343"/>
    </location>
</feature>
<feature type="lipid moiety-binding region" description="S-palmitoyl cysteine" evidence="1">
    <location>
        <position position="322"/>
    </location>
</feature>
<feature type="lipid moiety-binding region" description="S-palmitoyl cysteine" evidence="1">
    <location>
        <position position="323"/>
    </location>
</feature>
<feature type="glycosylation site" description="N-linked (GlcNAc...) asparagine" evidence="4">
    <location>
        <position position="2"/>
    </location>
</feature>
<feature type="glycosylation site" description="N-linked (GlcNAc...) asparagine" evidence="4">
    <location>
        <position position="15"/>
    </location>
</feature>
<feature type="disulfide bond" evidence="5">
    <location>
        <begin position="110"/>
        <end position="187"/>
    </location>
</feature>